<reference key="1">
    <citation type="journal article" date="2003" name="Proc. Natl. Acad. Sci. U.S.A.">
        <title>Complete genome sequence of the marine planctomycete Pirellula sp. strain 1.</title>
        <authorList>
            <person name="Gloeckner F.O."/>
            <person name="Kube M."/>
            <person name="Bauer M."/>
            <person name="Teeling H."/>
            <person name="Lombardot T."/>
            <person name="Ludwig W."/>
            <person name="Gade D."/>
            <person name="Beck A."/>
            <person name="Borzym K."/>
            <person name="Heitmann K."/>
            <person name="Rabus R."/>
            <person name="Schlesner H."/>
            <person name="Amann R."/>
            <person name="Reinhardt R."/>
        </authorList>
    </citation>
    <scope>NUCLEOTIDE SEQUENCE [LARGE SCALE GENOMIC DNA]</scope>
    <source>
        <strain>DSM 10527 / NCIMB 13988 / SH1</strain>
    </source>
</reference>
<name>PSTB_RHOBA</name>
<gene>
    <name evidence="1" type="primary">pstB</name>
    <name type="ordered locus">RB7211</name>
</gene>
<feature type="chain" id="PRO_0000092870" description="Phosphate import ATP-binding protein PstB">
    <location>
        <begin position="1"/>
        <end position="282"/>
    </location>
</feature>
<feature type="domain" description="ABC transporter" evidence="1">
    <location>
        <begin position="36"/>
        <end position="277"/>
    </location>
</feature>
<feature type="region of interest" description="Disordered" evidence="2">
    <location>
        <begin position="1"/>
        <end position="26"/>
    </location>
</feature>
<feature type="compositionally biased region" description="Polar residues" evidence="2">
    <location>
        <begin position="1"/>
        <end position="25"/>
    </location>
</feature>
<feature type="binding site" evidence="1">
    <location>
        <begin position="68"/>
        <end position="75"/>
    </location>
    <ligand>
        <name>ATP</name>
        <dbReference type="ChEBI" id="CHEBI:30616"/>
    </ligand>
</feature>
<dbReference type="EC" id="7.3.2.1" evidence="1"/>
<dbReference type="EMBL" id="BX294145">
    <property type="protein sequence ID" value="CAD75244.1"/>
    <property type="molecule type" value="Genomic_DNA"/>
</dbReference>
<dbReference type="RefSeq" id="NP_867697.1">
    <property type="nucleotide sequence ID" value="NC_005027.1"/>
</dbReference>
<dbReference type="SMR" id="Q7UP21"/>
<dbReference type="FunCoup" id="Q7UP21">
    <property type="interactions" value="347"/>
</dbReference>
<dbReference type="STRING" id="243090.RB7211"/>
<dbReference type="EnsemblBacteria" id="CAD75244">
    <property type="protein sequence ID" value="CAD75244"/>
    <property type="gene ID" value="RB7211"/>
</dbReference>
<dbReference type="KEGG" id="rba:RB7211"/>
<dbReference type="PATRIC" id="fig|243090.15.peg.3493"/>
<dbReference type="eggNOG" id="COG1117">
    <property type="taxonomic scope" value="Bacteria"/>
</dbReference>
<dbReference type="HOGENOM" id="CLU_000604_1_22_0"/>
<dbReference type="InParanoid" id="Q7UP21"/>
<dbReference type="OrthoDB" id="9804199at2"/>
<dbReference type="Proteomes" id="UP000001025">
    <property type="component" value="Chromosome"/>
</dbReference>
<dbReference type="GO" id="GO:0005886">
    <property type="term" value="C:plasma membrane"/>
    <property type="evidence" value="ECO:0007669"/>
    <property type="project" value="UniProtKB-SubCell"/>
</dbReference>
<dbReference type="GO" id="GO:0005524">
    <property type="term" value="F:ATP binding"/>
    <property type="evidence" value="ECO:0007669"/>
    <property type="project" value="UniProtKB-KW"/>
</dbReference>
<dbReference type="GO" id="GO:0016887">
    <property type="term" value="F:ATP hydrolysis activity"/>
    <property type="evidence" value="ECO:0007669"/>
    <property type="project" value="InterPro"/>
</dbReference>
<dbReference type="GO" id="GO:0015415">
    <property type="term" value="F:ATPase-coupled phosphate ion transmembrane transporter activity"/>
    <property type="evidence" value="ECO:0007669"/>
    <property type="project" value="UniProtKB-EC"/>
</dbReference>
<dbReference type="GO" id="GO:0035435">
    <property type="term" value="P:phosphate ion transmembrane transport"/>
    <property type="evidence" value="ECO:0007669"/>
    <property type="project" value="InterPro"/>
</dbReference>
<dbReference type="CDD" id="cd03260">
    <property type="entry name" value="ABC_PstB_phosphate_transporter"/>
    <property type="match status" value="1"/>
</dbReference>
<dbReference type="Gene3D" id="3.40.50.300">
    <property type="entry name" value="P-loop containing nucleotide triphosphate hydrolases"/>
    <property type="match status" value="1"/>
</dbReference>
<dbReference type="InterPro" id="IPR003593">
    <property type="entry name" value="AAA+_ATPase"/>
</dbReference>
<dbReference type="InterPro" id="IPR003439">
    <property type="entry name" value="ABC_transporter-like_ATP-bd"/>
</dbReference>
<dbReference type="InterPro" id="IPR017871">
    <property type="entry name" value="ABC_transporter-like_CS"/>
</dbReference>
<dbReference type="InterPro" id="IPR027417">
    <property type="entry name" value="P-loop_NTPase"/>
</dbReference>
<dbReference type="InterPro" id="IPR005670">
    <property type="entry name" value="PstB-like"/>
</dbReference>
<dbReference type="NCBIfam" id="TIGR00972">
    <property type="entry name" value="3a0107s01c2"/>
    <property type="match status" value="1"/>
</dbReference>
<dbReference type="PANTHER" id="PTHR43423">
    <property type="entry name" value="ABC TRANSPORTER I FAMILY MEMBER 17"/>
    <property type="match status" value="1"/>
</dbReference>
<dbReference type="PANTHER" id="PTHR43423:SF1">
    <property type="entry name" value="ABC TRANSPORTER I FAMILY MEMBER 17"/>
    <property type="match status" value="1"/>
</dbReference>
<dbReference type="Pfam" id="PF00005">
    <property type="entry name" value="ABC_tran"/>
    <property type="match status" value="1"/>
</dbReference>
<dbReference type="SMART" id="SM00382">
    <property type="entry name" value="AAA"/>
    <property type="match status" value="1"/>
</dbReference>
<dbReference type="SUPFAM" id="SSF52540">
    <property type="entry name" value="P-loop containing nucleoside triphosphate hydrolases"/>
    <property type="match status" value="1"/>
</dbReference>
<dbReference type="PROSITE" id="PS00211">
    <property type="entry name" value="ABC_TRANSPORTER_1"/>
    <property type="match status" value="1"/>
</dbReference>
<dbReference type="PROSITE" id="PS50893">
    <property type="entry name" value="ABC_TRANSPORTER_2"/>
    <property type="match status" value="1"/>
</dbReference>
<dbReference type="PROSITE" id="PS51238">
    <property type="entry name" value="PSTB"/>
    <property type="match status" value="1"/>
</dbReference>
<accession>Q7UP21</accession>
<protein>
    <recommendedName>
        <fullName evidence="1">Phosphate import ATP-binding protein PstB</fullName>
        <ecNumber evidence="1">7.3.2.1</ecNumber>
    </recommendedName>
    <alternativeName>
        <fullName evidence="1">ABC phosphate transporter</fullName>
    </alternativeName>
    <alternativeName>
        <fullName evidence="1">Phosphate-transporting ATPase</fullName>
    </alternativeName>
</protein>
<keyword id="KW-0067">ATP-binding</keyword>
<keyword id="KW-0997">Cell inner membrane</keyword>
<keyword id="KW-1003">Cell membrane</keyword>
<keyword id="KW-0472">Membrane</keyword>
<keyword id="KW-0547">Nucleotide-binding</keyword>
<keyword id="KW-0592">Phosphate transport</keyword>
<keyword id="KW-1185">Reference proteome</keyword>
<keyword id="KW-1278">Translocase</keyword>
<keyword id="KW-0813">Transport</keyword>
<evidence type="ECO:0000255" key="1">
    <source>
        <dbReference type="HAMAP-Rule" id="MF_01702"/>
    </source>
</evidence>
<evidence type="ECO:0000256" key="2">
    <source>
        <dbReference type="SAM" id="MobiDB-lite"/>
    </source>
</evidence>
<comment type="function">
    <text evidence="1">Part of the ABC transporter complex PstSACB involved in phosphate import. Responsible for energy coupling to the transport system.</text>
</comment>
<comment type="catalytic activity">
    <reaction evidence="1">
        <text>phosphate(out) + ATP + H2O = ADP + 2 phosphate(in) + H(+)</text>
        <dbReference type="Rhea" id="RHEA:24440"/>
        <dbReference type="ChEBI" id="CHEBI:15377"/>
        <dbReference type="ChEBI" id="CHEBI:15378"/>
        <dbReference type="ChEBI" id="CHEBI:30616"/>
        <dbReference type="ChEBI" id="CHEBI:43474"/>
        <dbReference type="ChEBI" id="CHEBI:456216"/>
        <dbReference type="EC" id="7.3.2.1"/>
    </reaction>
</comment>
<comment type="subunit">
    <text evidence="1">The complex is composed of two ATP-binding proteins (PstB), two transmembrane proteins (PstC and PstA) and a solute-binding protein (PstS).</text>
</comment>
<comment type="subcellular location">
    <subcellularLocation>
        <location evidence="1">Cell inner membrane</location>
        <topology evidence="1">Peripheral membrane protein</topology>
    </subcellularLocation>
</comment>
<comment type="similarity">
    <text evidence="1">Belongs to the ABC transporter superfamily. Phosphate importer (TC 3.A.1.7) family.</text>
</comment>
<sequence length="282" mass="31419">MKALNANISTMSEVSRSATPQSDSPAQAEVTPEVCIRIANFNAWYGSFQAIHNLSLDVPRNQVTAFIGPSGCGKSTLLRWINRMNDIVPSANSRGTLMIDELDVLAQTTDVVNLRRRVGMVFQKPNPFPKSIYDNVAFGPKLHLYLSRAELDELVEWSLRKAAVWDEVKDRLHAPALGLSGGQQQRLCIARAIAVGPEVLLMDEPCSALDPASTLAIEDLIYELREQYTIVMVTHNMQQASRCSDRTAFFFEGKLVESGPTQDVFTKPQEKRTDDYVRGRFG</sequence>
<organism>
    <name type="scientific">Rhodopirellula baltica (strain DSM 10527 / NCIMB 13988 / SH1)</name>
    <dbReference type="NCBI Taxonomy" id="243090"/>
    <lineage>
        <taxon>Bacteria</taxon>
        <taxon>Pseudomonadati</taxon>
        <taxon>Planctomycetota</taxon>
        <taxon>Planctomycetia</taxon>
        <taxon>Pirellulales</taxon>
        <taxon>Pirellulaceae</taxon>
        <taxon>Rhodopirellula</taxon>
    </lineage>
</organism>
<proteinExistence type="inferred from homology"/>